<comment type="function">
    <text evidence="1">Specifically methylates the uridine in position 2552 of 23S rRNA at the 2'-O position of the ribose in the fully assembled 50S ribosomal subunit.</text>
</comment>
<comment type="catalytic activity">
    <reaction evidence="1">
        <text>uridine(2552) in 23S rRNA + S-adenosyl-L-methionine = 2'-O-methyluridine(2552) in 23S rRNA + S-adenosyl-L-homocysteine + H(+)</text>
        <dbReference type="Rhea" id="RHEA:42720"/>
        <dbReference type="Rhea" id="RHEA-COMP:10202"/>
        <dbReference type="Rhea" id="RHEA-COMP:10203"/>
        <dbReference type="ChEBI" id="CHEBI:15378"/>
        <dbReference type="ChEBI" id="CHEBI:57856"/>
        <dbReference type="ChEBI" id="CHEBI:59789"/>
        <dbReference type="ChEBI" id="CHEBI:65315"/>
        <dbReference type="ChEBI" id="CHEBI:74478"/>
        <dbReference type="EC" id="2.1.1.166"/>
    </reaction>
</comment>
<comment type="subcellular location">
    <subcellularLocation>
        <location evidence="1">Cytoplasm</location>
    </subcellularLocation>
</comment>
<comment type="similarity">
    <text evidence="1">Belongs to the class I-like SAM-binding methyltransferase superfamily. RNA methyltransferase RlmE family.</text>
</comment>
<feature type="chain" id="PRO_0000282760" description="Ribosomal RNA large subunit methyltransferase E">
    <location>
        <begin position="1"/>
        <end position="207"/>
    </location>
</feature>
<feature type="active site" description="Proton acceptor" evidence="1">
    <location>
        <position position="161"/>
    </location>
</feature>
<feature type="binding site" evidence="1">
    <location>
        <position position="60"/>
    </location>
    <ligand>
        <name>S-adenosyl-L-methionine</name>
        <dbReference type="ChEBI" id="CHEBI:59789"/>
    </ligand>
</feature>
<feature type="binding site" evidence="1">
    <location>
        <position position="62"/>
    </location>
    <ligand>
        <name>S-adenosyl-L-methionine</name>
        <dbReference type="ChEBI" id="CHEBI:59789"/>
    </ligand>
</feature>
<feature type="binding site" evidence="1">
    <location>
        <position position="80"/>
    </location>
    <ligand>
        <name>S-adenosyl-L-methionine</name>
        <dbReference type="ChEBI" id="CHEBI:59789"/>
    </ligand>
</feature>
<feature type="binding site" evidence="1">
    <location>
        <position position="96"/>
    </location>
    <ligand>
        <name>S-adenosyl-L-methionine</name>
        <dbReference type="ChEBI" id="CHEBI:59789"/>
    </ligand>
</feature>
<feature type="binding site" evidence="1">
    <location>
        <position position="121"/>
    </location>
    <ligand>
        <name>S-adenosyl-L-methionine</name>
        <dbReference type="ChEBI" id="CHEBI:59789"/>
    </ligand>
</feature>
<evidence type="ECO:0000255" key="1">
    <source>
        <dbReference type="HAMAP-Rule" id="MF_01547"/>
    </source>
</evidence>
<gene>
    <name evidence="1" type="primary">rlmE</name>
    <name evidence="1" type="synonym">ftsJ</name>
    <name evidence="1" type="synonym">rrmJ</name>
    <name type="ordered locus">Maqu_0388</name>
</gene>
<dbReference type="EC" id="2.1.1.166" evidence="1"/>
<dbReference type="EMBL" id="CP000514">
    <property type="protein sequence ID" value="ABM17493.1"/>
    <property type="molecule type" value="Genomic_DNA"/>
</dbReference>
<dbReference type="RefSeq" id="WP_011783941.1">
    <property type="nucleotide sequence ID" value="NC_008740.1"/>
</dbReference>
<dbReference type="SMR" id="A1TXM4"/>
<dbReference type="STRING" id="351348.Maqu_0388"/>
<dbReference type="KEGG" id="maq:Maqu_0388"/>
<dbReference type="eggNOG" id="COG0293">
    <property type="taxonomic scope" value="Bacteria"/>
</dbReference>
<dbReference type="HOGENOM" id="CLU_009422_4_0_6"/>
<dbReference type="OrthoDB" id="9790080at2"/>
<dbReference type="Proteomes" id="UP000000998">
    <property type="component" value="Chromosome"/>
</dbReference>
<dbReference type="GO" id="GO:0005737">
    <property type="term" value="C:cytoplasm"/>
    <property type="evidence" value="ECO:0007669"/>
    <property type="project" value="UniProtKB-SubCell"/>
</dbReference>
<dbReference type="GO" id="GO:0008650">
    <property type="term" value="F:rRNA (uridine-2'-O-)-methyltransferase activity"/>
    <property type="evidence" value="ECO:0007669"/>
    <property type="project" value="UniProtKB-UniRule"/>
</dbReference>
<dbReference type="FunFam" id="3.40.50.150:FF:000005">
    <property type="entry name" value="Ribosomal RNA large subunit methyltransferase E"/>
    <property type="match status" value="1"/>
</dbReference>
<dbReference type="Gene3D" id="3.40.50.150">
    <property type="entry name" value="Vaccinia Virus protein VP39"/>
    <property type="match status" value="1"/>
</dbReference>
<dbReference type="HAMAP" id="MF_01547">
    <property type="entry name" value="RNA_methyltr_E"/>
    <property type="match status" value="1"/>
</dbReference>
<dbReference type="InterPro" id="IPR050082">
    <property type="entry name" value="RNA_methyltr_RlmE"/>
</dbReference>
<dbReference type="InterPro" id="IPR002877">
    <property type="entry name" value="RNA_MeTrfase_FtsJ_dom"/>
</dbReference>
<dbReference type="InterPro" id="IPR015507">
    <property type="entry name" value="rRNA-MeTfrase_E"/>
</dbReference>
<dbReference type="InterPro" id="IPR029063">
    <property type="entry name" value="SAM-dependent_MTases_sf"/>
</dbReference>
<dbReference type="NCBIfam" id="NF008390">
    <property type="entry name" value="PRK11188.1"/>
    <property type="match status" value="1"/>
</dbReference>
<dbReference type="PANTHER" id="PTHR10920">
    <property type="entry name" value="RIBOSOMAL RNA METHYLTRANSFERASE"/>
    <property type="match status" value="1"/>
</dbReference>
<dbReference type="PANTHER" id="PTHR10920:SF18">
    <property type="entry name" value="RRNA METHYLTRANSFERASE 2, MITOCHONDRIAL"/>
    <property type="match status" value="1"/>
</dbReference>
<dbReference type="Pfam" id="PF01728">
    <property type="entry name" value="FtsJ"/>
    <property type="match status" value="1"/>
</dbReference>
<dbReference type="PIRSF" id="PIRSF005461">
    <property type="entry name" value="23S_rRNA_mtase"/>
    <property type="match status" value="1"/>
</dbReference>
<dbReference type="SUPFAM" id="SSF53335">
    <property type="entry name" value="S-adenosyl-L-methionine-dependent methyltransferases"/>
    <property type="match status" value="1"/>
</dbReference>
<organism>
    <name type="scientific">Marinobacter nauticus (strain ATCC 700491 / DSM 11845 / VT8)</name>
    <name type="common">Marinobacter aquaeolei</name>
    <dbReference type="NCBI Taxonomy" id="351348"/>
    <lineage>
        <taxon>Bacteria</taxon>
        <taxon>Pseudomonadati</taxon>
        <taxon>Pseudomonadota</taxon>
        <taxon>Gammaproteobacteria</taxon>
        <taxon>Pseudomonadales</taxon>
        <taxon>Marinobacteraceae</taxon>
        <taxon>Marinobacter</taxon>
    </lineage>
</organism>
<protein>
    <recommendedName>
        <fullName evidence="1">Ribosomal RNA large subunit methyltransferase E</fullName>
        <ecNumber evidence="1">2.1.1.166</ecNumber>
    </recommendedName>
    <alternativeName>
        <fullName evidence="1">23S rRNA Um2552 methyltransferase</fullName>
    </alternativeName>
    <alternativeName>
        <fullName evidence="1">rRNA (uridine-2'-O-)-methyltransferase</fullName>
    </alternativeName>
</protein>
<accession>A1TXM4</accession>
<keyword id="KW-0963">Cytoplasm</keyword>
<keyword id="KW-0489">Methyltransferase</keyword>
<keyword id="KW-0698">rRNA processing</keyword>
<keyword id="KW-0949">S-adenosyl-L-methionine</keyword>
<keyword id="KW-0808">Transferase</keyword>
<name>RLME_MARN8</name>
<reference key="1">
    <citation type="journal article" date="2011" name="Appl. Environ. Microbiol.">
        <title>Genomic potential of Marinobacter aquaeolei, a biogeochemical 'opportunitroph'.</title>
        <authorList>
            <person name="Singer E."/>
            <person name="Webb E.A."/>
            <person name="Nelson W.C."/>
            <person name="Heidelberg J.F."/>
            <person name="Ivanova N."/>
            <person name="Pati A."/>
            <person name="Edwards K.J."/>
        </authorList>
    </citation>
    <scope>NUCLEOTIDE SEQUENCE [LARGE SCALE GENOMIC DNA]</scope>
    <source>
        <strain>ATCC 700491 / DSM 11845 / VT8</strain>
    </source>
</reference>
<proteinExistence type="inferred from homology"/>
<sequence>MARSKSSNRWLEEHVNDPFVKQAQQDGYRSRASYKLLEINNKDRLIKPTDLVVDLGSAPGGWSQVAAKLVGHKGRVVASDILPMDPIAGVEFIQGDFTEQEVFDQIMAILDGARADVVISDMAPNISGVNAADQAASMYLVELALDMACQVLKPKGSFVAKVFHGEGYDEYVKTVRESFDKVVIRKPDSSRARSREVYLVAKGFRVA</sequence>